<protein>
    <recommendedName>
        <fullName>Vomeronasal type-1 receptor 2</fullName>
    </recommendedName>
    <alternativeName>
        <fullName>G-protein coupled receptor GPCR25</fullName>
        <shortName>hGPCR25</shortName>
    </alternativeName>
    <alternativeName>
        <fullName>V1r-like receptor 2</fullName>
    </alternativeName>
</protein>
<organism>
    <name type="scientific">Homo sapiens</name>
    <name type="common">Human</name>
    <dbReference type="NCBI Taxonomy" id="9606"/>
    <lineage>
        <taxon>Eukaryota</taxon>
        <taxon>Metazoa</taxon>
        <taxon>Chordata</taxon>
        <taxon>Craniata</taxon>
        <taxon>Vertebrata</taxon>
        <taxon>Euteleostomi</taxon>
        <taxon>Mammalia</taxon>
        <taxon>Eutheria</taxon>
        <taxon>Euarchontoglires</taxon>
        <taxon>Primates</taxon>
        <taxon>Haplorrhini</taxon>
        <taxon>Catarrhini</taxon>
        <taxon>Hominidae</taxon>
        <taxon>Homo</taxon>
    </lineage>
</organism>
<evidence type="ECO:0000255" key="1"/>
<evidence type="ECO:0000255" key="2">
    <source>
        <dbReference type="PROSITE-ProRule" id="PRU00521"/>
    </source>
</evidence>
<evidence type="ECO:0000269" key="3">
    <source>
    </source>
</evidence>
<evidence type="ECO:0000269" key="4">
    <source>
    </source>
</evidence>
<evidence type="ECO:0000269" key="5">
    <source ref="4"/>
</evidence>
<reference key="1">
    <citation type="journal article" date="2002" name="Curr. Biol.">
        <title>Novel human vomeronasal receptor-like genes reveal species-specific families.</title>
        <authorList>
            <person name="Rodriguez I."/>
            <person name="Mombaerts P."/>
        </authorList>
    </citation>
    <scope>NUCLEOTIDE SEQUENCE [GENOMIC DNA]</scope>
    <scope>VARIANT ARG-38</scope>
</reference>
<reference key="2">
    <citation type="journal article" date="2003" name="Proc. Natl. Acad. Sci. U.S.A.">
        <title>Evolutionary deterioration of the vomeronasal pheromone transduction pathway in catarrhine primates.</title>
        <authorList>
            <person name="Zhang J."/>
            <person name="Webb D.M."/>
        </authorList>
    </citation>
    <scope>NUCLEOTIDE SEQUENCE [GENOMIC DNA]</scope>
</reference>
<reference key="3">
    <citation type="journal article" date="2002" name="FEBS Lett.">
        <title>Identification of G protein-coupled receptor genes from the human genome sequence.</title>
        <authorList>
            <person name="Takeda S."/>
            <person name="Kadowaki S."/>
            <person name="Haga T."/>
            <person name="Takaesu H."/>
            <person name="Mitaku S."/>
        </authorList>
    </citation>
    <scope>NUCLEOTIDE SEQUENCE [LARGE SCALE GENOMIC DNA]</scope>
</reference>
<reference key="4">
    <citation type="submission" date="2005-07" db="EMBL/GenBank/DDBJ databases">
        <authorList>
            <person name="Mural R.J."/>
            <person name="Istrail S."/>
            <person name="Sutton G.G."/>
            <person name="Florea L."/>
            <person name="Halpern A.L."/>
            <person name="Mobarry C.M."/>
            <person name="Lippert R."/>
            <person name="Walenz B."/>
            <person name="Shatkay H."/>
            <person name="Dew I."/>
            <person name="Miller J.R."/>
            <person name="Flanigan M.J."/>
            <person name="Edwards N.J."/>
            <person name="Bolanos R."/>
            <person name="Fasulo D."/>
            <person name="Halldorsson B.V."/>
            <person name="Hannenhalli S."/>
            <person name="Turner R."/>
            <person name="Yooseph S."/>
            <person name="Lu F."/>
            <person name="Nusskern D.R."/>
            <person name="Shue B.C."/>
            <person name="Zheng X.H."/>
            <person name="Zhong F."/>
            <person name="Delcher A.L."/>
            <person name="Huson D.H."/>
            <person name="Kravitz S.A."/>
            <person name="Mouchard L."/>
            <person name="Reinert K."/>
            <person name="Remington K.A."/>
            <person name="Clark A.G."/>
            <person name="Waterman M.S."/>
            <person name="Eichler E.E."/>
            <person name="Adams M.D."/>
            <person name="Hunkapiller M.W."/>
            <person name="Myers E.W."/>
            <person name="Venter J.C."/>
        </authorList>
    </citation>
    <scope>NUCLEOTIDE SEQUENCE [LARGE SCALE GENOMIC DNA]</scope>
    <scope>VARIANT ARG-38</scope>
</reference>
<reference key="5">
    <citation type="journal article" date="2004" name="Genome Res.">
        <title>The status, quality, and expansion of the NIH full-length cDNA project: the Mammalian Gene Collection (MGC).</title>
        <authorList>
            <consortium name="The MGC Project Team"/>
        </authorList>
    </citation>
    <scope>NUCLEOTIDE SEQUENCE [LARGE SCALE MRNA]</scope>
    <scope>VARIANT ARG-38</scope>
</reference>
<gene>
    <name type="primary">VN1R2</name>
    <name type="synonym">V1RL2</name>
</gene>
<keyword id="KW-1003">Cell membrane</keyword>
<keyword id="KW-0297">G-protein coupled receptor</keyword>
<keyword id="KW-0325">Glycoprotein</keyword>
<keyword id="KW-0472">Membrane</keyword>
<keyword id="KW-0589">Pheromone response</keyword>
<keyword id="KW-0675">Receptor</keyword>
<keyword id="KW-1185">Reference proteome</keyword>
<keyword id="KW-0807">Transducer</keyword>
<keyword id="KW-0812">Transmembrane</keyword>
<keyword id="KW-1133">Transmembrane helix</keyword>
<accession>Q8NFZ6</accession>
<accession>A1L411</accession>
<accession>Q8TDU4</accession>
<dbReference type="EMBL" id="AF370359">
    <property type="protein sequence ID" value="AAM83034.1"/>
    <property type="molecule type" value="Genomic_DNA"/>
</dbReference>
<dbReference type="EMBL" id="AY312480">
    <property type="protein sequence ID" value="AAP85615.1"/>
    <property type="molecule type" value="Genomic_DNA"/>
</dbReference>
<dbReference type="EMBL" id="AY312481">
    <property type="protein sequence ID" value="AAP85616.1"/>
    <property type="molecule type" value="Genomic_DNA"/>
</dbReference>
<dbReference type="EMBL" id="AY312482">
    <property type="protein sequence ID" value="AAP85617.1"/>
    <property type="molecule type" value="Genomic_DNA"/>
</dbReference>
<dbReference type="EMBL" id="AB083607">
    <property type="protein sequence ID" value="BAB89320.1"/>
    <property type="molecule type" value="Genomic_DNA"/>
</dbReference>
<dbReference type="EMBL" id="CH471135">
    <property type="protein sequence ID" value="EAW72126.1"/>
    <property type="molecule type" value="Genomic_DNA"/>
</dbReference>
<dbReference type="EMBL" id="BC130356">
    <property type="protein sequence ID" value="AAI30357.1"/>
    <property type="molecule type" value="mRNA"/>
</dbReference>
<dbReference type="EMBL" id="BC130358">
    <property type="protein sequence ID" value="AAI30359.1"/>
    <property type="molecule type" value="mRNA"/>
</dbReference>
<dbReference type="CCDS" id="CCDS12862.1"/>
<dbReference type="RefSeq" id="NP_776255.2">
    <property type="nucleotide sequence ID" value="NM_173856.2"/>
</dbReference>
<dbReference type="SMR" id="Q8NFZ6"/>
<dbReference type="BioGRID" id="130443">
    <property type="interactions" value="2"/>
</dbReference>
<dbReference type="IntAct" id="Q8NFZ6">
    <property type="interactions" value="1"/>
</dbReference>
<dbReference type="STRING" id="9606.ENSP00000351244"/>
<dbReference type="GlyCosmos" id="Q8NFZ6">
    <property type="glycosylation" value="2 sites, No reported glycans"/>
</dbReference>
<dbReference type="GlyGen" id="Q8NFZ6">
    <property type="glycosylation" value="2 sites"/>
</dbReference>
<dbReference type="BioMuta" id="VN1R2"/>
<dbReference type="DMDM" id="146337173"/>
<dbReference type="MassIVE" id="Q8NFZ6"/>
<dbReference type="PaxDb" id="9606-ENSP00000351244"/>
<dbReference type="Antibodypedia" id="32680">
    <property type="antibodies" value="122 antibodies from 20 providers"/>
</dbReference>
<dbReference type="DNASU" id="317701"/>
<dbReference type="Ensembl" id="ENST00000341702.3">
    <property type="protein sequence ID" value="ENSP00000351244.2"/>
    <property type="gene ID" value="ENSG00000196131.6"/>
</dbReference>
<dbReference type="GeneID" id="317701"/>
<dbReference type="KEGG" id="hsa:317701"/>
<dbReference type="MANE-Select" id="ENST00000341702.3">
    <property type="protein sequence ID" value="ENSP00000351244.2"/>
    <property type="RefSeq nucleotide sequence ID" value="NM_173856.2"/>
    <property type="RefSeq protein sequence ID" value="NP_776255.2"/>
</dbReference>
<dbReference type="UCSC" id="uc002qbi.2">
    <property type="organism name" value="human"/>
</dbReference>
<dbReference type="AGR" id="HGNC:19872"/>
<dbReference type="CTD" id="317701"/>
<dbReference type="DisGeNET" id="317701"/>
<dbReference type="GeneCards" id="VN1R2"/>
<dbReference type="HGNC" id="HGNC:19872">
    <property type="gene designation" value="VN1R2"/>
</dbReference>
<dbReference type="HPA" id="ENSG00000196131">
    <property type="expression patterns" value="Not detected"/>
</dbReference>
<dbReference type="neXtProt" id="NX_Q8NFZ6"/>
<dbReference type="PharmGKB" id="PA134969616"/>
<dbReference type="VEuPathDB" id="HostDB:ENSG00000196131"/>
<dbReference type="eggNOG" id="ENOG502RD1P">
    <property type="taxonomic scope" value="Eukaryota"/>
</dbReference>
<dbReference type="GeneTree" id="ENSGT00960000186612"/>
<dbReference type="HOGENOM" id="CLU_058641_1_0_1"/>
<dbReference type="InParanoid" id="Q8NFZ6"/>
<dbReference type="OMA" id="WSNNNIT"/>
<dbReference type="OrthoDB" id="9606139at2759"/>
<dbReference type="PAN-GO" id="Q8NFZ6">
    <property type="GO annotations" value="0 GO annotations based on evolutionary models"/>
</dbReference>
<dbReference type="PhylomeDB" id="Q8NFZ6"/>
<dbReference type="PathwayCommons" id="Q8NFZ6"/>
<dbReference type="SignaLink" id="Q8NFZ6"/>
<dbReference type="BioGRID-ORCS" id="317701">
    <property type="hits" value="23 hits in 1143 CRISPR screens"/>
</dbReference>
<dbReference type="GeneWiki" id="VN1R2"/>
<dbReference type="GenomeRNAi" id="317701"/>
<dbReference type="Pharos" id="Q8NFZ6">
    <property type="development level" value="Tbio"/>
</dbReference>
<dbReference type="PRO" id="PR:Q8NFZ6"/>
<dbReference type="Proteomes" id="UP000005640">
    <property type="component" value="Chromosome 19"/>
</dbReference>
<dbReference type="RNAct" id="Q8NFZ6">
    <property type="molecule type" value="protein"/>
</dbReference>
<dbReference type="Bgee" id="ENSG00000196131">
    <property type="expression patterns" value="Expressed in male germ line stem cell (sensu Vertebrata) in testis and 87 other cell types or tissues"/>
</dbReference>
<dbReference type="GO" id="GO:0005886">
    <property type="term" value="C:plasma membrane"/>
    <property type="evidence" value="ECO:0007669"/>
    <property type="project" value="UniProtKB-SubCell"/>
</dbReference>
<dbReference type="GO" id="GO:0016503">
    <property type="term" value="F:pheromone receptor activity"/>
    <property type="evidence" value="ECO:0007669"/>
    <property type="project" value="InterPro"/>
</dbReference>
<dbReference type="GO" id="GO:0019236">
    <property type="term" value="P:response to pheromone"/>
    <property type="evidence" value="ECO:0007669"/>
    <property type="project" value="UniProtKB-KW"/>
</dbReference>
<dbReference type="GO" id="GO:0007606">
    <property type="term" value="P:sensory perception of chemical stimulus"/>
    <property type="evidence" value="ECO:0007669"/>
    <property type="project" value="UniProtKB-ARBA"/>
</dbReference>
<dbReference type="CDD" id="cd13949">
    <property type="entry name" value="7tm_V1R_pheromone"/>
    <property type="match status" value="1"/>
</dbReference>
<dbReference type="FunFam" id="1.20.1070.10:FF:000033">
    <property type="entry name" value="Vomeronasal type-1 receptor"/>
    <property type="match status" value="1"/>
</dbReference>
<dbReference type="Gene3D" id="1.20.1070.10">
    <property type="entry name" value="Rhodopsin 7-helix transmembrane proteins"/>
    <property type="match status" value="1"/>
</dbReference>
<dbReference type="InterPro" id="IPR017452">
    <property type="entry name" value="GPCR_Rhodpsn_7TM"/>
</dbReference>
<dbReference type="InterPro" id="IPR004072">
    <property type="entry name" value="Vmron_rcpt_1"/>
</dbReference>
<dbReference type="PANTHER" id="PTHR24062">
    <property type="entry name" value="VOMERONASAL TYPE-1 RECEPTOR"/>
    <property type="match status" value="1"/>
</dbReference>
<dbReference type="Pfam" id="PF03402">
    <property type="entry name" value="V1R"/>
    <property type="match status" value="1"/>
</dbReference>
<dbReference type="PRINTS" id="PR01534">
    <property type="entry name" value="VOMERONASL1R"/>
</dbReference>
<dbReference type="SUPFAM" id="SSF81321">
    <property type="entry name" value="Family A G protein-coupled receptor-like"/>
    <property type="match status" value="1"/>
</dbReference>
<dbReference type="PROSITE" id="PS50262">
    <property type="entry name" value="G_PROTEIN_RECEP_F1_2"/>
    <property type="match status" value="1"/>
</dbReference>
<name>VN1R2_HUMAN</name>
<sequence length="395" mass="44476">MTHTLYPTPFALYPINISAAWHLGPLPVSCFVSNKYQCSLAFGATTGLRVLVVVVPQTQLSFLSSLCLVSLFLHSLVSAHGEKPTKPVGLDPTLFQVVVGILGNFSLLYYYMFLYFRGYKPRSTDLILRHLTVADSLVILSKRIPETMATFGLKHFDNYFGCKFLLYAHRVGRGVSIGSTCLLSVFQVITINPRNSRWAEMKVKAPTYIGLSNILCWAFHMLVNAIFPIYTTGKWSNNNITKKGDLGYCSAPLSDEVTKSVYAALTSFHDVLCLGLMLWASSSIVLVLYRHKQQVQHICRNNLYPNSSPGNRAIQSILALVSTFALCYALSFITYVYLALFDNSSWWLVNTAALIIACFPTISPFVLMCRDPSRSRLCSICCRRNRRFFHDFRKM</sequence>
<comment type="function">
    <text>Putative pheromone receptor.</text>
</comment>
<comment type="subcellular location">
    <subcellularLocation>
        <location>Cell membrane</location>
        <topology>Multi-pass membrane protein</topology>
    </subcellularLocation>
</comment>
<comment type="miscellaneous">
    <text>The chimpanzee, gorilla and orangutan orthologous proteins do not exist, their genes are pseudogenes.</text>
</comment>
<comment type="similarity">
    <text evidence="2">Belongs to the G-protein coupled receptor 1 family.</text>
</comment>
<comment type="online information" name="Protein Spotlight">
    <link uri="https://www.proteinspotlight.org/back_issues/061"/>
    <text>No one nose - Issue 61 of August 2005</text>
</comment>
<feature type="chain" id="PRO_0000070214" description="Vomeronasal type-1 receptor 2">
    <location>
        <begin position="1"/>
        <end position="395"/>
    </location>
</feature>
<feature type="transmembrane region" description="Helical; Name=0" evidence="1">
    <location>
        <begin position="12"/>
        <end position="32"/>
    </location>
</feature>
<feature type="topological domain" description="Extracellular" evidence="1">
    <location>
        <begin position="33"/>
        <end position="51"/>
    </location>
</feature>
<feature type="transmembrane region" description="Helical; Name=1" evidence="1">
    <location>
        <begin position="52"/>
        <end position="72"/>
    </location>
</feature>
<feature type="topological domain" description="Cytoplasmic" evidence="1">
    <location>
        <begin position="73"/>
        <end position="93"/>
    </location>
</feature>
<feature type="transmembrane region" description="Helical; Name=2" evidence="1">
    <location>
        <begin position="94"/>
        <end position="114"/>
    </location>
</feature>
<feature type="topological domain" description="Extracellular" evidence="1">
    <location>
        <begin position="115"/>
        <end position="170"/>
    </location>
</feature>
<feature type="transmembrane region" description="Helical; Name=3" evidence="1">
    <location>
        <begin position="171"/>
        <end position="191"/>
    </location>
</feature>
<feature type="topological domain" description="Cytoplasmic" evidence="1">
    <location>
        <begin position="192"/>
        <end position="208"/>
    </location>
</feature>
<feature type="transmembrane region" description="Helical; Name=4" evidence="1">
    <location>
        <begin position="209"/>
        <end position="229"/>
    </location>
</feature>
<feature type="topological domain" description="Extracellular" evidence="1">
    <location>
        <begin position="230"/>
        <end position="267"/>
    </location>
</feature>
<feature type="transmembrane region" description="Helical; Name=5" evidence="1">
    <location>
        <begin position="268"/>
        <end position="288"/>
    </location>
</feature>
<feature type="topological domain" description="Cytoplasmic" evidence="1">
    <location>
        <begin position="289"/>
        <end position="316"/>
    </location>
</feature>
<feature type="transmembrane region" description="Helical; Name=6" evidence="1">
    <location>
        <begin position="317"/>
        <end position="337"/>
    </location>
</feature>
<feature type="topological domain" description="Extracellular" evidence="1">
    <location>
        <begin position="338"/>
        <end position="346"/>
    </location>
</feature>
<feature type="transmembrane region" description="Helical; Name=7" evidence="1">
    <location>
        <begin position="347"/>
        <end position="367"/>
    </location>
</feature>
<feature type="topological domain" description="Cytoplasmic" evidence="1">
    <location>
        <begin position="368"/>
        <end position="395"/>
    </location>
</feature>
<feature type="glycosylation site" description="N-linked (GlcNAc...) asparagine" evidence="1">
    <location>
        <position position="239"/>
    </location>
</feature>
<feature type="glycosylation site" description="N-linked (GlcNAc...) asparagine" evidence="1">
    <location>
        <position position="343"/>
    </location>
</feature>
<feature type="sequence variant" id="VAR_022798" description="In dbSNP:rs2965249." evidence="3 4 5">
    <original>C</original>
    <variation>R</variation>
    <location>
        <position position="38"/>
    </location>
</feature>
<proteinExistence type="evidence at transcript level"/>